<organism>
    <name type="scientific">Saccharolobus islandicus (strain M.16.27)</name>
    <name type="common">Sulfolobus islandicus</name>
    <dbReference type="NCBI Taxonomy" id="427318"/>
    <lineage>
        <taxon>Archaea</taxon>
        <taxon>Thermoproteota</taxon>
        <taxon>Thermoprotei</taxon>
        <taxon>Sulfolobales</taxon>
        <taxon>Sulfolobaceae</taxon>
        <taxon>Saccharolobus</taxon>
    </lineage>
</organism>
<name>HEM3_SACI3</name>
<evidence type="ECO:0000255" key="1">
    <source>
        <dbReference type="HAMAP-Rule" id="MF_00260"/>
    </source>
</evidence>
<proteinExistence type="inferred from homology"/>
<keyword id="KW-0627">Porphyrin biosynthesis</keyword>
<keyword id="KW-0808">Transferase</keyword>
<gene>
    <name evidence="1" type="primary">hemC</name>
    <name type="ordered locus">M1627_2030</name>
</gene>
<feature type="chain" id="PRO_1000204662" description="Probable porphobilinogen deaminase">
    <location>
        <begin position="1"/>
        <end position="293"/>
    </location>
</feature>
<feature type="modified residue" description="S-(dipyrrolylmethanemethyl)cysteine" evidence="1">
    <location>
        <position position="233"/>
    </location>
</feature>
<reference key="1">
    <citation type="journal article" date="2009" name="Proc. Natl. Acad. Sci. U.S.A.">
        <title>Biogeography of the Sulfolobus islandicus pan-genome.</title>
        <authorList>
            <person name="Reno M.L."/>
            <person name="Held N.L."/>
            <person name="Fields C.J."/>
            <person name="Burke P.V."/>
            <person name="Whitaker R.J."/>
        </authorList>
    </citation>
    <scope>NUCLEOTIDE SEQUENCE [LARGE SCALE GENOMIC DNA]</scope>
    <source>
        <strain>M.16.27</strain>
    </source>
</reference>
<accession>C3MZR8</accession>
<sequence>MKIRIAARGSKLSRIQVDMLGEKLKKIGIEYEIIDIKTKADLFSTEPLSKLGKGVFEKEVNEAVLEGKADIAVHSMKDILSEINPSLEIFAVLERDPPYDILIAEKNLDKLDSNITIGTSSIRRKNFLKYIKPEINTKDIRGNVDTRIRKYLSKEYQGLILAEASLKRLNMTMNYHRLNVYDFTPEANQGIIVALGRKKDEKIKEIFKEINHKDTLDEALAERAVISLVGGGCHSPIGVLFKKEGKEFYGIASYSDGKKKITVSISKPGDPYTIGSELGLLLKKEMKNENIIP</sequence>
<protein>
    <recommendedName>
        <fullName evidence="1">Probable porphobilinogen deaminase</fullName>
        <shortName evidence="1">PBG</shortName>
        <ecNumber evidence="1">2.5.1.61</ecNumber>
    </recommendedName>
    <alternativeName>
        <fullName evidence="1">Hydroxymethylbilane synthase</fullName>
        <shortName evidence="1">HMBS</shortName>
    </alternativeName>
    <alternativeName>
        <fullName evidence="1">Pre-uroporphyrinogen synthase</fullName>
    </alternativeName>
</protein>
<dbReference type="EC" id="2.5.1.61" evidence="1"/>
<dbReference type="EMBL" id="CP001401">
    <property type="protein sequence ID" value="ACP55900.1"/>
    <property type="molecule type" value="Genomic_DNA"/>
</dbReference>
<dbReference type="RefSeq" id="WP_012711923.1">
    <property type="nucleotide sequence ID" value="NC_012632.1"/>
</dbReference>
<dbReference type="SMR" id="C3MZR8"/>
<dbReference type="GeneID" id="84059306"/>
<dbReference type="KEGG" id="sim:M1627_2030"/>
<dbReference type="HOGENOM" id="CLU_019704_1_0_2"/>
<dbReference type="UniPathway" id="UPA00251">
    <property type="reaction ID" value="UER00319"/>
</dbReference>
<dbReference type="Proteomes" id="UP000002307">
    <property type="component" value="Chromosome"/>
</dbReference>
<dbReference type="GO" id="GO:0005737">
    <property type="term" value="C:cytoplasm"/>
    <property type="evidence" value="ECO:0007669"/>
    <property type="project" value="TreeGrafter"/>
</dbReference>
<dbReference type="GO" id="GO:0004418">
    <property type="term" value="F:hydroxymethylbilane synthase activity"/>
    <property type="evidence" value="ECO:0007669"/>
    <property type="project" value="UniProtKB-UniRule"/>
</dbReference>
<dbReference type="GO" id="GO:0006782">
    <property type="term" value="P:protoporphyrinogen IX biosynthetic process"/>
    <property type="evidence" value="ECO:0007669"/>
    <property type="project" value="UniProtKB-UniRule"/>
</dbReference>
<dbReference type="CDD" id="cd13644">
    <property type="entry name" value="PBP2_HemC_archaea"/>
    <property type="match status" value="1"/>
</dbReference>
<dbReference type="Gene3D" id="3.40.190.10">
    <property type="entry name" value="Periplasmic binding protein-like II"/>
    <property type="match status" value="2"/>
</dbReference>
<dbReference type="Gene3D" id="3.30.160.40">
    <property type="entry name" value="Porphobilinogen deaminase, C-terminal domain"/>
    <property type="match status" value="1"/>
</dbReference>
<dbReference type="HAMAP" id="MF_00260">
    <property type="entry name" value="Porphobil_deam"/>
    <property type="match status" value="1"/>
</dbReference>
<dbReference type="InterPro" id="IPR000860">
    <property type="entry name" value="HemC"/>
</dbReference>
<dbReference type="InterPro" id="IPR022419">
    <property type="entry name" value="Porphobilin_deaminase_cofac_BS"/>
</dbReference>
<dbReference type="InterPro" id="IPR022417">
    <property type="entry name" value="Porphobilin_deaminase_N"/>
</dbReference>
<dbReference type="InterPro" id="IPR022418">
    <property type="entry name" value="Porphobilinogen_deaminase_C"/>
</dbReference>
<dbReference type="InterPro" id="IPR036803">
    <property type="entry name" value="Porphobilinogen_deaminase_C_sf"/>
</dbReference>
<dbReference type="NCBIfam" id="TIGR00212">
    <property type="entry name" value="hemC"/>
    <property type="match status" value="1"/>
</dbReference>
<dbReference type="PANTHER" id="PTHR11557">
    <property type="entry name" value="PORPHOBILINOGEN DEAMINASE"/>
    <property type="match status" value="1"/>
</dbReference>
<dbReference type="PANTHER" id="PTHR11557:SF0">
    <property type="entry name" value="PORPHOBILINOGEN DEAMINASE"/>
    <property type="match status" value="1"/>
</dbReference>
<dbReference type="Pfam" id="PF01379">
    <property type="entry name" value="Porphobil_deam"/>
    <property type="match status" value="1"/>
</dbReference>
<dbReference type="Pfam" id="PF03900">
    <property type="entry name" value="Porphobil_deamC"/>
    <property type="match status" value="1"/>
</dbReference>
<dbReference type="PIRSF" id="PIRSF001438">
    <property type="entry name" value="4pyrrol_synth_OHMeBilane_synth"/>
    <property type="match status" value="1"/>
</dbReference>
<dbReference type="PRINTS" id="PR00151">
    <property type="entry name" value="PORPHBDMNASE"/>
</dbReference>
<dbReference type="SUPFAM" id="SSF53850">
    <property type="entry name" value="Periplasmic binding protein-like II"/>
    <property type="match status" value="1"/>
</dbReference>
<dbReference type="SUPFAM" id="SSF54782">
    <property type="entry name" value="Porphobilinogen deaminase (hydroxymethylbilane synthase), C-terminal domain"/>
    <property type="match status" value="1"/>
</dbReference>
<dbReference type="PROSITE" id="PS00533">
    <property type="entry name" value="PORPHOBILINOGEN_DEAM"/>
    <property type="match status" value="1"/>
</dbReference>
<comment type="function">
    <text evidence="1">Tetrapolymerization of the monopyrrole PBG into the hydroxymethylbilane pre-uroporphyrinogen in several discrete steps.</text>
</comment>
<comment type="catalytic activity">
    <reaction evidence="1">
        <text>4 porphobilinogen + H2O = hydroxymethylbilane + 4 NH4(+)</text>
        <dbReference type="Rhea" id="RHEA:13185"/>
        <dbReference type="ChEBI" id="CHEBI:15377"/>
        <dbReference type="ChEBI" id="CHEBI:28938"/>
        <dbReference type="ChEBI" id="CHEBI:57845"/>
        <dbReference type="ChEBI" id="CHEBI:58126"/>
        <dbReference type="EC" id="2.5.1.61"/>
    </reaction>
</comment>
<comment type="cofactor">
    <cofactor evidence="1">
        <name>dipyrromethane</name>
        <dbReference type="ChEBI" id="CHEBI:60342"/>
    </cofactor>
    <text evidence="1">Binds 1 dipyrromethane group covalently.</text>
</comment>
<comment type="pathway">
    <text evidence="1">Porphyrin-containing compound metabolism; protoporphyrin-IX biosynthesis; coproporphyrinogen-III from 5-aminolevulinate: step 2/4.</text>
</comment>
<comment type="miscellaneous">
    <text evidence="1">The porphobilinogen subunits are added to the dipyrromethane group.</text>
</comment>
<comment type="similarity">
    <text evidence="1">Belongs to the HMBS family.</text>
</comment>